<name>ATM1_ASPFU</name>
<proteinExistence type="inferred from homology"/>
<evidence type="ECO:0000250" key="1">
    <source>
        <dbReference type="UniProtKB" id="P40416"/>
    </source>
</evidence>
<evidence type="ECO:0000250" key="2">
    <source>
        <dbReference type="UniProtKB" id="Q2G506"/>
    </source>
</evidence>
<evidence type="ECO:0000250" key="3">
    <source>
        <dbReference type="UniProtKB" id="Q9NP58"/>
    </source>
</evidence>
<evidence type="ECO:0000255" key="4"/>
<evidence type="ECO:0000255" key="5">
    <source>
        <dbReference type="PROSITE-ProRule" id="PRU00434"/>
    </source>
</evidence>
<evidence type="ECO:0000255" key="6">
    <source>
        <dbReference type="PROSITE-ProRule" id="PRU00441"/>
    </source>
</evidence>
<evidence type="ECO:0000256" key="7">
    <source>
        <dbReference type="SAM" id="MobiDB-lite"/>
    </source>
</evidence>
<evidence type="ECO:0000305" key="8"/>
<reference key="1">
    <citation type="journal article" date="2005" name="Nature">
        <title>Genomic sequence of the pathogenic and allergenic filamentous fungus Aspergillus fumigatus.</title>
        <authorList>
            <person name="Nierman W.C."/>
            <person name="Pain A."/>
            <person name="Anderson M.J."/>
            <person name="Wortman J.R."/>
            <person name="Kim H.S."/>
            <person name="Arroyo J."/>
            <person name="Berriman M."/>
            <person name="Abe K."/>
            <person name="Archer D.B."/>
            <person name="Bermejo C."/>
            <person name="Bennett J.W."/>
            <person name="Bowyer P."/>
            <person name="Chen D."/>
            <person name="Collins M."/>
            <person name="Coulsen R."/>
            <person name="Davies R."/>
            <person name="Dyer P.S."/>
            <person name="Farman M.L."/>
            <person name="Fedorova N."/>
            <person name="Fedorova N.D."/>
            <person name="Feldblyum T.V."/>
            <person name="Fischer R."/>
            <person name="Fosker N."/>
            <person name="Fraser A."/>
            <person name="Garcia J.L."/>
            <person name="Garcia M.J."/>
            <person name="Goble A."/>
            <person name="Goldman G.H."/>
            <person name="Gomi K."/>
            <person name="Griffith-Jones S."/>
            <person name="Gwilliam R."/>
            <person name="Haas B.J."/>
            <person name="Haas H."/>
            <person name="Harris D.E."/>
            <person name="Horiuchi H."/>
            <person name="Huang J."/>
            <person name="Humphray S."/>
            <person name="Jimenez J."/>
            <person name="Keller N."/>
            <person name="Khouri H."/>
            <person name="Kitamoto K."/>
            <person name="Kobayashi T."/>
            <person name="Konzack S."/>
            <person name="Kulkarni R."/>
            <person name="Kumagai T."/>
            <person name="Lafton A."/>
            <person name="Latge J.-P."/>
            <person name="Li W."/>
            <person name="Lord A."/>
            <person name="Lu C."/>
            <person name="Majoros W.H."/>
            <person name="May G.S."/>
            <person name="Miller B.L."/>
            <person name="Mohamoud Y."/>
            <person name="Molina M."/>
            <person name="Monod M."/>
            <person name="Mouyna I."/>
            <person name="Mulligan S."/>
            <person name="Murphy L.D."/>
            <person name="O'Neil S."/>
            <person name="Paulsen I."/>
            <person name="Penalva M.A."/>
            <person name="Pertea M."/>
            <person name="Price C."/>
            <person name="Pritchard B.L."/>
            <person name="Quail M.A."/>
            <person name="Rabbinowitsch E."/>
            <person name="Rawlins N."/>
            <person name="Rajandream M.A."/>
            <person name="Reichard U."/>
            <person name="Renauld H."/>
            <person name="Robson G.D."/>
            <person name="Rodriguez de Cordoba S."/>
            <person name="Rodriguez-Pena J.M."/>
            <person name="Ronning C.M."/>
            <person name="Rutter S."/>
            <person name="Salzberg S.L."/>
            <person name="Sanchez M."/>
            <person name="Sanchez-Ferrero J.C."/>
            <person name="Saunders D."/>
            <person name="Seeger K."/>
            <person name="Squares R."/>
            <person name="Squares S."/>
            <person name="Takeuchi M."/>
            <person name="Tekaia F."/>
            <person name="Turner G."/>
            <person name="Vazquez de Aldana C.R."/>
            <person name="Weidman J."/>
            <person name="White O."/>
            <person name="Woodward J.R."/>
            <person name="Yu J.-H."/>
            <person name="Fraser C.M."/>
            <person name="Galagan J.E."/>
            <person name="Asai K."/>
            <person name="Machida M."/>
            <person name="Hall N."/>
            <person name="Barrell B.G."/>
            <person name="Denning D.W."/>
        </authorList>
    </citation>
    <scope>NUCLEOTIDE SEQUENCE [LARGE SCALE GENOMIC DNA]</scope>
    <source>
        <strain>ATCC MYA-4609 / CBS 101355 / FGSC A1100 / Af293</strain>
    </source>
</reference>
<organism>
    <name type="scientific">Aspergillus fumigatus (strain ATCC MYA-4609 / CBS 101355 / FGSC A1100 / Af293)</name>
    <name type="common">Neosartorya fumigata</name>
    <dbReference type="NCBI Taxonomy" id="330879"/>
    <lineage>
        <taxon>Eukaryota</taxon>
        <taxon>Fungi</taxon>
        <taxon>Dikarya</taxon>
        <taxon>Ascomycota</taxon>
        <taxon>Pezizomycotina</taxon>
        <taxon>Eurotiomycetes</taxon>
        <taxon>Eurotiomycetidae</taxon>
        <taxon>Eurotiales</taxon>
        <taxon>Aspergillaceae</taxon>
        <taxon>Aspergillus</taxon>
        <taxon>Aspergillus subgen. Fumigati</taxon>
    </lineage>
</organism>
<dbReference type="EC" id="7.-.-.-" evidence="2"/>
<dbReference type="EMBL" id="AAHF01000006">
    <property type="protein sequence ID" value="EAL89127.1"/>
    <property type="molecule type" value="Genomic_DNA"/>
</dbReference>
<dbReference type="RefSeq" id="XP_751165.1">
    <property type="nucleotide sequence ID" value="XM_746072.1"/>
</dbReference>
<dbReference type="SMR" id="Q4WLN7"/>
<dbReference type="FunCoup" id="Q4WLN7">
    <property type="interactions" value="676"/>
</dbReference>
<dbReference type="STRING" id="330879.Q4WLN7"/>
<dbReference type="EnsemblFungi" id="EAL89127">
    <property type="protein sequence ID" value="EAL89127"/>
    <property type="gene ID" value="AFUA_6G12870"/>
</dbReference>
<dbReference type="GeneID" id="3508472"/>
<dbReference type="KEGG" id="afm:AFUA_6G12870"/>
<dbReference type="VEuPathDB" id="FungiDB:Afu6g12870"/>
<dbReference type="eggNOG" id="KOG0057">
    <property type="taxonomic scope" value="Eukaryota"/>
</dbReference>
<dbReference type="HOGENOM" id="CLU_000604_84_1_1"/>
<dbReference type="InParanoid" id="Q4WLN7"/>
<dbReference type="OMA" id="VFHIIPI"/>
<dbReference type="OrthoDB" id="6500128at2759"/>
<dbReference type="Proteomes" id="UP000002530">
    <property type="component" value="Chromosome 6"/>
</dbReference>
<dbReference type="GO" id="GO:0005743">
    <property type="term" value="C:mitochondrial inner membrane"/>
    <property type="evidence" value="ECO:0000318"/>
    <property type="project" value="GO_Central"/>
</dbReference>
<dbReference type="GO" id="GO:0140359">
    <property type="term" value="F:ABC-type transporter activity"/>
    <property type="evidence" value="ECO:0007669"/>
    <property type="project" value="InterPro"/>
</dbReference>
<dbReference type="GO" id="GO:0005524">
    <property type="term" value="F:ATP binding"/>
    <property type="evidence" value="ECO:0007669"/>
    <property type="project" value="UniProtKB-KW"/>
</dbReference>
<dbReference type="GO" id="GO:0016887">
    <property type="term" value="F:ATP hydrolysis activity"/>
    <property type="evidence" value="ECO:0007669"/>
    <property type="project" value="InterPro"/>
</dbReference>
<dbReference type="GO" id="GO:0042626">
    <property type="term" value="F:ATPase-coupled transmembrane transporter activity"/>
    <property type="evidence" value="ECO:0000318"/>
    <property type="project" value="GO_Central"/>
</dbReference>
<dbReference type="GO" id="GO:0006879">
    <property type="term" value="P:intracellular iron ion homeostasis"/>
    <property type="evidence" value="ECO:0000318"/>
    <property type="project" value="GO_Central"/>
</dbReference>
<dbReference type="GO" id="GO:0055085">
    <property type="term" value="P:transmembrane transport"/>
    <property type="evidence" value="ECO:0000318"/>
    <property type="project" value="GO_Central"/>
</dbReference>
<dbReference type="CDD" id="cd18582">
    <property type="entry name" value="ABC_6TM_ATM1_ABCB7"/>
    <property type="match status" value="1"/>
</dbReference>
<dbReference type="CDD" id="cd03253">
    <property type="entry name" value="ABCC_ATM1_transporter"/>
    <property type="match status" value="1"/>
</dbReference>
<dbReference type="FunFam" id="1.20.1560.10:FF:000004">
    <property type="entry name" value="ATP-binding cassette sub-family B member 7"/>
    <property type="match status" value="1"/>
</dbReference>
<dbReference type="FunFam" id="3.40.50.300:FF:000186">
    <property type="entry name" value="ATP-binding cassette sub-family B member 7, mitochondrial"/>
    <property type="match status" value="1"/>
</dbReference>
<dbReference type="Gene3D" id="1.20.1560.10">
    <property type="entry name" value="ABC transporter type 1, transmembrane domain"/>
    <property type="match status" value="1"/>
</dbReference>
<dbReference type="Gene3D" id="3.40.50.300">
    <property type="entry name" value="P-loop containing nucleotide triphosphate hydrolases"/>
    <property type="match status" value="1"/>
</dbReference>
<dbReference type="InterPro" id="IPR003593">
    <property type="entry name" value="AAA+_ATPase"/>
</dbReference>
<dbReference type="InterPro" id="IPR011527">
    <property type="entry name" value="ABC1_TM_dom"/>
</dbReference>
<dbReference type="InterPro" id="IPR036640">
    <property type="entry name" value="ABC1_TM_sf"/>
</dbReference>
<dbReference type="InterPro" id="IPR003439">
    <property type="entry name" value="ABC_transporter-like_ATP-bd"/>
</dbReference>
<dbReference type="InterPro" id="IPR017871">
    <property type="entry name" value="ABC_transporter-like_CS"/>
</dbReference>
<dbReference type="InterPro" id="IPR027417">
    <property type="entry name" value="P-loop_NTPase"/>
</dbReference>
<dbReference type="InterPro" id="IPR039421">
    <property type="entry name" value="Type_1_exporter"/>
</dbReference>
<dbReference type="PANTHER" id="PTHR24221">
    <property type="entry name" value="ATP-BINDING CASSETTE SUB-FAMILY B"/>
    <property type="match status" value="1"/>
</dbReference>
<dbReference type="PANTHER" id="PTHR24221:SF402">
    <property type="entry name" value="IRON-SULFUR CLUSTERS TRANSPORTER ABCB7, MITOCHONDRIAL"/>
    <property type="match status" value="1"/>
</dbReference>
<dbReference type="Pfam" id="PF00664">
    <property type="entry name" value="ABC_membrane"/>
    <property type="match status" value="1"/>
</dbReference>
<dbReference type="Pfam" id="PF00005">
    <property type="entry name" value="ABC_tran"/>
    <property type="match status" value="1"/>
</dbReference>
<dbReference type="SMART" id="SM00382">
    <property type="entry name" value="AAA"/>
    <property type="match status" value="1"/>
</dbReference>
<dbReference type="SUPFAM" id="SSF90123">
    <property type="entry name" value="ABC transporter transmembrane region"/>
    <property type="match status" value="1"/>
</dbReference>
<dbReference type="SUPFAM" id="SSF52540">
    <property type="entry name" value="P-loop containing nucleoside triphosphate hydrolases"/>
    <property type="match status" value="1"/>
</dbReference>
<dbReference type="PROSITE" id="PS50929">
    <property type="entry name" value="ABC_TM1F"/>
    <property type="match status" value="1"/>
</dbReference>
<dbReference type="PROSITE" id="PS00211">
    <property type="entry name" value="ABC_TRANSPORTER_1"/>
    <property type="match status" value="1"/>
</dbReference>
<dbReference type="PROSITE" id="PS50893">
    <property type="entry name" value="ABC_TRANSPORTER_2"/>
    <property type="match status" value="1"/>
</dbReference>
<protein>
    <recommendedName>
        <fullName evidence="8">Iron-sulfur clusters transporter atm1, mitochondrial</fullName>
        <ecNumber evidence="2">7.-.-.-</ecNumber>
    </recommendedName>
</protein>
<gene>
    <name evidence="8" type="primary">atm1</name>
    <name type="ORF">AFUA_6G12870</name>
</gene>
<comment type="function">
    <text evidence="1">Performs an essential function in the generation of cytoplasmic iron-sulfur proteins by mediating the ATP-dependent export of Fe/S cluster precursors synthesized by nfs1 and other mitochondrial proteins (By similarity). Hydrolyzes ATP (By similarity). Binds glutathione and may function by transporting a glutathione-conjugated iron-sulfur compound (By similarity).</text>
</comment>
<comment type="subunit">
    <text evidence="1">Homodimer.</text>
</comment>
<comment type="subcellular location">
    <subcellularLocation>
        <location evidence="1">Mitochondrion inner membrane</location>
        <topology evidence="6">Multi-pass membrane protein</topology>
    </subcellularLocation>
</comment>
<comment type="similarity">
    <text evidence="8">Belongs to the ABC transporter superfamily. ABCB family. Heavy Metal importer (TC 3.A.1.210) subfamily.</text>
</comment>
<accession>Q4WLN7</accession>
<keyword id="KW-0067">ATP-binding</keyword>
<keyword id="KW-0472">Membrane</keyword>
<keyword id="KW-0496">Mitochondrion</keyword>
<keyword id="KW-0999">Mitochondrion inner membrane</keyword>
<keyword id="KW-0547">Nucleotide-binding</keyword>
<keyword id="KW-1185">Reference proteome</keyword>
<keyword id="KW-0809">Transit peptide</keyword>
<keyword id="KW-1278">Translocase</keyword>
<keyword id="KW-0812">Transmembrane</keyword>
<keyword id="KW-1133">Transmembrane helix</keyword>
<keyword id="KW-0813">Transport</keyword>
<sequence length="727" mass="80659">MLPGAARSPCLRFPRRFAHGGLAAPRTALWATAWYGIHSKAFTSANSPLRKDASKEPALASNSKTTNPIPTQASASVNPPKDARNATTAKKDLLSETTLANKEQRKADWAIIKEMAKYLWPKDDWGTKLRVGTALSLLVGAKILNVEVPFYFKSIVDSMNIDFATVGGTAYTVAGSMIIAYGVTRIGATLFQELRNAVFASVAQKAIRRVARNVFEHLLRLDLNFHLSRQTGGLTRAIDRGTKGISFLLTSMVFHVVPTALEISLVCGILTYQYGFQFAAITAATMVAYTAFTITTTAWRTKFRKQANAADNRGATVAVDSLINYEAVKYFNNEQYQVARYDKALKAYEDASIKVTTSLAFLNSGQNMIFSSALAAMMYLAANGVANGNLTVGDLVMVNQLVFQLSVPLNFLGSVYRELRQSLLDMETLFNLQKVNVNIKEKPDAKPLQLHKGGEIRFENVTFGYHPDRPILKNASFTIPAGQKFAIVGPSGCGKSTILRLLFRFYDVQEGRILIDDQDVRDVSLESLRKAIGVVPQDTPLFNDTIAHNIRYGRIDATDEEVHKAAQRARIDALIQKLPEGYQTAVGERGMMISGGEKQRLAISRLILKDPELLFFDEATSALDTYTEQALLQNINSILKEKKRTSVFVAHRLRTIYDSDQILVLKDGRVAEMGSHRELLDLNGIYAELWNAQEMSLAQDLEFERETERDDVESKERDMAPGPKAQQ</sequence>
<feature type="transit peptide" description="Mitochondrion" evidence="4">
    <location>
        <begin position="1"/>
        <end status="unknown"/>
    </location>
</feature>
<feature type="chain" id="PRO_0000255438" description="Iron-sulfur clusters transporter atm1, mitochondrial">
    <location>
        <begin status="unknown"/>
        <end position="727"/>
    </location>
</feature>
<feature type="topological domain" description="Mitochondrial matrix" evidence="1">
    <location>
        <begin status="unknown"/>
        <end position="130"/>
    </location>
</feature>
<feature type="transmembrane region" description="Helical" evidence="6">
    <location>
        <begin position="131"/>
        <end position="152"/>
    </location>
</feature>
<feature type="topological domain" description="Mitochondrial intermembrane" evidence="1">
    <location>
        <begin position="153"/>
        <end position="175"/>
    </location>
</feature>
<feature type="transmembrane region" description="Helical" evidence="6">
    <location>
        <begin position="176"/>
        <end position="199"/>
    </location>
</feature>
<feature type="topological domain" description="Mitochondrial matrix" evidence="1">
    <location>
        <begin position="200"/>
        <end position="248"/>
    </location>
</feature>
<feature type="transmembrane region" description="Helical" evidence="6">
    <location>
        <begin position="249"/>
        <end position="272"/>
    </location>
</feature>
<feature type="topological domain" description="Mitochondrial intermembrane" evidence="1">
    <location>
        <position position="273"/>
    </location>
</feature>
<feature type="transmembrane region" description="Helical" evidence="6">
    <location>
        <begin position="274"/>
        <end position="294"/>
    </location>
</feature>
<feature type="topological domain" description="Mitochondrial matrix" evidence="1">
    <location>
        <begin position="295"/>
        <end position="360"/>
    </location>
</feature>
<feature type="transmembrane region" description="Helical" evidence="6">
    <location>
        <begin position="361"/>
        <end position="379"/>
    </location>
</feature>
<feature type="topological domain" description="Mitochondrial intermembrane" evidence="1">
    <location>
        <begin position="380"/>
        <end position="394"/>
    </location>
</feature>
<feature type="transmembrane region" description="Helical" evidence="6">
    <location>
        <begin position="395"/>
        <end position="416"/>
    </location>
</feature>
<feature type="topological domain" description="Mitochondrial matrix" evidence="1">
    <location>
        <begin position="417"/>
        <end position="727"/>
    </location>
</feature>
<feature type="domain" description="ABC transmembrane type-1" evidence="6">
    <location>
        <begin position="131"/>
        <end position="421"/>
    </location>
</feature>
<feature type="domain" description="ABC transporter" evidence="5">
    <location>
        <begin position="456"/>
        <end position="692"/>
    </location>
</feature>
<feature type="region of interest" description="Disordered" evidence="7">
    <location>
        <begin position="46"/>
        <end position="97"/>
    </location>
</feature>
<feature type="region of interest" description="Disordered" evidence="7">
    <location>
        <begin position="702"/>
        <end position="727"/>
    </location>
</feature>
<feature type="compositionally biased region" description="Polar residues" evidence="7">
    <location>
        <begin position="60"/>
        <end position="77"/>
    </location>
</feature>
<feature type="compositionally biased region" description="Basic and acidic residues" evidence="7">
    <location>
        <begin position="81"/>
        <end position="94"/>
    </location>
</feature>
<feature type="compositionally biased region" description="Basic and acidic residues" evidence="7">
    <location>
        <begin position="702"/>
        <end position="719"/>
    </location>
</feature>
<feature type="binding site" evidence="1">
    <location>
        <begin position="300"/>
        <end position="304"/>
    </location>
    <ligand>
        <name>glutathione</name>
        <dbReference type="ChEBI" id="CHEBI:57925"/>
    </ligand>
</feature>
<feature type="binding site" evidence="1">
    <location>
        <begin position="363"/>
        <end position="366"/>
    </location>
    <ligand>
        <name>glutathione</name>
        <dbReference type="ChEBI" id="CHEBI:57925"/>
    </ligand>
</feature>
<feature type="binding site" evidence="2">
    <location>
        <position position="413"/>
    </location>
    <ligand>
        <name>glutathione</name>
        <dbReference type="ChEBI" id="CHEBI:57925"/>
    </ligand>
</feature>
<feature type="binding site" evidence="3">
    <location>
        <position position="465"/>
    </location>
    <ligand>
        <name>ATP</name>
        <dbReference type="ChEBI" id="CHEBI:30616"/>
    </ligand>
</feature>
<feature type="binding site" evidence="5">
    <location>
        <begin position="489"/>
        <end position="500"/>
    </location>
    <ligand>
        <name>ATP</name>
        <dbReference type="ChEBI" id="CHEBI:30616"/>
    </ligand>
</feature>